<protein>
    <recommendedName>
        <fullName evidence="1">Integration host factor subunit beta</fullName>
        <shortName evidence="1">IHF-beta</shortName>
    </recommendedName>
</protein>
<keyword id="KW-0233">DNA recombination</keyword>
<keyword id="KW-0238">DNA-binding</keyword>
<keyword id="KW-0804">Transcription</keyword>
<keyword id="KW-0805">Transcription regulation</keyword>
<keyword id="KW-0810">Translation regulation</keyword>
<comment type="function">
    <text evidence="1">This protein is one of the two subunits of integration host factor, a specific DNA-binding protein that functions in genetic recombination as well as in transcriptional and translational control.</text>
</comment>
<comment type="subunit">
    <text evidence="1">Heterodimer of an alpha and a beta chain.</text>
</comment>
<comment type="similarity">
    <text evidence="1">Belongs to the bacterial histone-like protein family.</text>
</comment>
<sequence length="94" mass="10566">MIKSELVQIIASRNPHLFQRDVENIVGAVFDEITNALAEGNRVELRGFGAFSVKNRPARSGRNPRTGETVDVEEKWVPFFKTGKKLRDRLNGAV</sequence>
<dbReference type="EMBL" id="AE017223">
    <property type="protein sequence ID" value="AAX73561.1"/>
    <property type="molecule type" value="Genomic_DNA"/>
</dbReference>
<dbReference type="RefSeq" id="WP_002965401.1">
    <property type="nucleotide sequence ID" value="NC_006932.1"/>
</dbReference>
<dbReference type="SMR" id="Q57FM3"/>
<dbReference type="EnsemblBacteria" id="AAX73561">
    <property type="protein sequence ID" value="AAX73561"/>
    <property type="gene ID" value="BruAb1_0149"/>
</dbReference>
<dbReference type="KEGG" id="bmb:BruAb1_0149"/>
<dbReference type="HOGENOM" id="CLU_105066_2_0_5"/>
<dbReference type="Proteomes" id="UP000000540">
    <property type="component" value="Chromosome I"/>
</dbReference>
<dbReference type="GO" id="GO:0005694">
    <property type="term" value="C:chromosome"/>
    <property type="evidence" value="ECO:0007669"/>
    <property type="project" value="InterPro"/>
</dbReference>
<dbReference type="GO" id="GO:0005829">
    <property type="term" value="C:cytosol"/>
    <property type="evidence" value="ECO:0007669"/>
    <property type="project" value="TreeGrafter"/>
</dbReference>
<dbReference type="GO" id="GO:0003677">
    <property type="term" value="F:DNA binding"/>
    <property type="evidence" value="ECO:0007669"/>
    <property type="project" value="UniProtKB-UniRule"/>
</dbReference>
<dbReference type="GO" id="GO:0030527">
    <property type="term" value="F:structural constituent of chromatin"/>
    <property type="evidence" value="ECO:0007669"/>
    <property type="project" value="InterPro"/>
</dbReference>
<dbReference type="GO" id="GO:0006310">
    <property type="term" value="P:DNA recombination"/>
    <property type="evidence" value="ECO:0007669"/>
    <property type="project" value="UniProtKB-UniRule"/>
</dbReference>
<dbReference type="GO" id="GO:0006355">
    <property type="term" value="P:regulation of DNA-templated transcription"/>
    <property type="evidence" value="ECO:0007669"/>
    <property type="project" value="UniProtKB-UniRule"/>
</dbReference>
<dbReference type="GO" id="GO:0006417">
    <property type="term" value="P:regulation of translation"/>
    <property type="evidence" value="ECO:0007669"/>
    <property type="project" value="UniProtKB-UniRule"/>
</dbReference>
<dbReference type="CDD" id="cd13836">
    <property type="entry name" value="IHF_B"/>
    <property type="match status" value="1"/>
</dbReference>
<dbReference type="Gene3D" id="4.10.520.10">
    <property type="entry name" value="IHF-like DNA-binding proteins"/>
    <property type="match status" value="1"/>
</dbReference>
<dbReference type="HAMAP" id="MF_00381">
    <property type="entry name" value="IHF_beta"/>
    <property type="match status" value="1"/>
</dbReference>
<dbReference type="InterPro" id="IPR000119">
    <property type="entry name" value="Hist_DNA-bd"/>
</dbReference>
<dbReference type="InterPro" id="IPR020816">
    <property type="entry name" value="Histone-like_DNA-bd_CS"/>
</dbReference>
<dbReference type="InterPro" id="IPR010992">
    <property type="entry name" value="IHF-like_DNA-bd_dom_sf"/>
</dbReference>
<dbReference type="InterPro" id="IPR005685">
    <property type="entry name" value="IHF_beta"/>
</dbReference>
<dbReference type="NCBIfam" id="TIGR00988">
    <property type="entry name" value="hip"/>
    <property type="match status" value="1"/>
</dbReference>
<dbReference type="NCBIfam" id="NF001222">
    <property type="entry name" value="PRK00199.1"/>
    <property type="match status" value="1"/>
</dbReference>
<dbReference type="PANTHER" id="PTHR33175">
    <property type="entry name" value="DNA-BINDING PROTEIN HU"/>
    <property type="match status" value="1"/>
</dbReference>
<dbReference type="PANTHER" id="PTHR33175:SF5">
    <property type="entry name" value="INTEGRATION HOST FACTOR SUBUNIT BETA"/>
    <property type="match status" value="1"/>
</dbReference>
<dbReference type="Pfam" id="PF00216">
    <property type="entry name" value="Bac_DNA_binding"/>
    <property type="match status" value="1"/>
</dbReference>
<dbReference type="PRINTS" id="PR01727">
    <property type="entry name" value="DNABINDINGHU"/>
</dbReference>
<dbReference type="SMART" id="SM00411">
    <property type="entry name" value="BHL"/>
    <property type="match status" value="1"/>
</dbReference>
<dbReference type="SUPFAM" id="SSF47729">
    <property type="entry name" value="IHF-like DNA-binding proteins"/>
    <property type="match status" value="1"/>
</dbReference>
<dbReference type="PROSITE" id="PS00045">
    <property type="entry name" value="HISTONE_LIKE"/>
    <property type="match status" value="1"/>
</dbReference>
<proteinExistence type="inferred from homology"/>
<name>IHFB_BRUAB</name>
<accession>Q57FM3</accession>
<reference key="1">
    <citation type="journal article" date="2005" name="J. Bacteriol.">
        <title>Completion of the genome sequence of Brucella abortus and comparison to the highly similar genomes of Brucella melitensis and Brucella suis.</title>
        <authorList>
            <person name="Halling S.M."/>
            <person name="Peterson-Burch B.D."/>
            <person name="Bricker B.J."/>
            <person name="Zuerner R.L."/>
            <person name="Qing Z."/>
            <person name="Li L.-L."/>
            <person name="Kapur V."/>
            <person name="Alt D.P."/>
            <person name="Olsen S.C."/>
        </authorList>
    </citation>
    <scope>NUCLEOTIDE SEQUENCE [LARGE SCALE GENOMIC DNA]</scope>
    <source>
        <strain>9-941</strain>
    </source>
</reference>
<gene>
    <name evidence="1" type="primary">ihfB</name>
    <name evidence="1" type="synonym">himD</name>
    <name type="ordered locus">BruAb1_0149</name>
</gene>
<organism>
    <name type="scientific">Brucella abortus biovar 1 (strain 9-941)</name>
    <dbReference type="NCBI Taxonomy" id="262698"/>
    <lineage>
        <taxon>Bacteria</taxon>
        <taxon>Pseudomonadati</taxon>
        <taxon>Pseudomonadota</taxon>
        <taxon>Alphaproteobacteria</taxon>
        <taxon>Hyphomicrobiales</taxon>
        <taxon>Brucellaceae</taxon>
        <taxon>Brucella/Ochrobactrum group</taxon>
        <taxon>Brucella</taxon>
    </lineage>
</organism>
<feature type="chain" id="PRO_1000060590" description="Integration host factor subunit beta">
    <location>
        <begin position="1"/>
        <end position="94"/>
    </location>
</feature>
<evidence type="ECO:0000255" key="1">
    <source>
        <dbReference type="HAMAP-Rule" id="MF_00381"/>
    </source>
</evidence>